<evidence type="ECO:0000255" key="1">
    <source>
        <dbReference type="HAMAP-Rule" id="MF_01617"/>
    </source>
</evidence>
<gene>
    <name evidence="1" type="primary">fadJ</name>
    <name type="ordered locus">VV1_1976</name>
</gene>
<protein>
    <recommendedName>
        <fullName evidence="1">Fatty acid oxidation complex subunit alpha</fullName>
    </recommendedName>
    <domain>
        <recommendedName>
            <fullName evidence="1">Enoyl-CoA hydratase/3-hydroxybutyryl-CoA epimerase</fullName>
            <ecNumber evidence="1">4.2.1.17</ecNumber>
            <ecNumber evidence="1">5.1.2.3</ecNumber>
        </recommendedName>
    </domain>
    <domain>
        <recommendedName>
            <fullName evidence="1">3-hydroxyacyl-CoA dehydrogenase</fullName>
            <ecNumber evidence="1">1.1.1.35</ecNumber>
        </recommendedName>
    </domain>
</protein>
<accession>Q8DB47</accession>
<sequence length="705" mass="77028">MSEQKAFNLKIDEQNIAWLGIDVPNEKMNTLQAAFADEMKAIFAQLKDSSGLKGLIVHSLKPDNFVAGADVRMLEACKTAPEAEALARQGQELFQQLSDLPYPVVAAIHGPCLGGGLELALACDFRVCSDDDATRLGLPEVQLGLLPGSGGTQRLPRLIGLLPSLDLILTGKQLRANKAKKLGVVDACVPQTILLDVAKQFVEKGKKRAKQKVTTKEKLLSGSGLGRKFVFEQAAKKTHEKTRGNYPATVAILQVIQHGLEKGMKQGLELEAKRFGELVMSNESKALRSIFFATTEMKKETGSEAKPSKVGMVGVLGGGLMGAGISHVSVAKAKVPVRIKDVSNDGVLNALKYNYKLFDKQRKRRILSKAQLQSKMLQLSGGTDFTSFNRTDVVIEAVFEDLSLKQQMVADIEANAKPETIFATNTSSLPIHKIAEKAQRPENIVGLHYFSPVEKMPLVEVIPHESTSEETIATVVALAKKQGKTPIVVKDQAGFYVNRILAPYMNESAHILLANEPIDKIDTALLDFGFPVGPITLLDEVGVDIGAKIMPILVAELGARFKGPDVFDVLLNDGRKGRKSGKGFYTYKGKKKEVDKSVYKLLKLTPESKLSDNDIALRCVLPMLNEAVRCLDDGIIRSPRDGDIGAIFGIGFPPFLGGPFRYMDQFGLKELVEKMNQFAEKYGDRFAPCDGLLTRAGEGRRFYDN</sequence>
<comment type="function">
    <text evidence="1">Catalyzes the formation of a hydroxyacyl-CoA by addition of water on enoyl-CoA. Also exhibits 3-hydroxyacyl-CoA epimerase and 3-hydroxyacyl-CoA dehydrogenase activities.</text>
</comment>
<comment type="catalytic activity">
    <reaction evidence="1">
        <text>a (3S)-3-hydroxyacyl-CoA = a (2E)-enoyl-CoA + H2O</text>
        <dbReference type="Rhea" id="RHEA:16105"/>
        <dbReference type="ChEBI" id="CHEBI:15377"/>
        <dbReference type="ChEBI" id="CHEBI:57318"/>
        <dbReference type="ChEBI" id="CHEBI:58856"/>
        <dbReference type="EC" id="4.2.1.17"/>
    </reaction>
</comment>
<comment type="catalytic activity">
    <reaction evidence="1">
        <text>a 4-saturated-(3S)-3-hydroxyacyl-CoA = a (3E)-enoyl-CoA + H2O</text>
        <dbReference type="Rhea" id="RHEA:20724"/>
        <dbReference type="ChEBI" id="CHEBI:15377"/>
        <dbReference type="ChEBI" id="CHEBI:58521"/>
        <dbReference type="ChEBI" id="CHEBI:137480"/>
        <dbReference type="EC" id="4.2.1.17"/>
    </reaction>
</comment>
<comment type="catalytic activity">
    <reaction evidence="1">
        <text>a (3S)-3-hydroxyacyl-CoA + NAD(+) = a 3-oxoacyl-CoA + NADH + H(+)</text>
        <dbReference type="Rhea" id="RHEA:22432"/>
        <dbReference type="ChEBI" id="CHEBI:15378"/>
        <dbReference type="ChEBI" id="CHEBI:57318"/>
        <dbReference type="ChEBI" id="CHEBI:57540"/>
        <dbReference type="ChEBI" id="CHEBI:57945"/>
        <dbReference type="ChEBI" id="CHEBI:90726"/>
        <dbReference type="EC" id="1.1.1.35"/>
    </reaction>
</comment>
<comment type="catalytic activity">
    <reaction evidence="1">
        <text>(3S)-3-hydroxybutanoyl-CoA = (3R)-3-hydroxybutanoyl-CoA</text>
        <dbReference type="Rhea" id="RHEA:21760"/>
        <dbReference type="ChEBI" id="CHEBI:57315"/>
        <dbReference type="ChEBI" id="CHEBI:57316"/>
        <dbReference type="EC" id="5.1.2.3"/>
    </reaction>
</comment>
<comment type="pathway">
    <text evidence="1">Lipid metabolism; fatty acid beta-oxidation.</text>
</comment>
<comment type="subunit">
    <text evidence="1">Heterotetramer of two alpha chains (FadJ) and two beta chains (FadI).</text>
</comment>
<comment type="subcellular location">
    <subcellularLocation>
        <location evidence="1">Cytoplasm</location>
    </subcellularLocation>
</comment>
<comment type="similarity">
    <text evidence="1">In the N-terminal section; belongs to the enoyl-CoA hydratase/isomerase family.</text>
</comment>
<comment type="similarity">
    <text evidence="1">In the central section; belongs to the 3-hydroxyacyl-CoA dehydrogenase family.</text>
</comment>
<reference key="1">
    <citation type="submission" date="2002-12" db="EMBL/GenBank/DDBJ databases">
        <title>Complete genome sequence of Vibrio vulnificus CMCP6.</title>
        <authorList>
            <person name="Rhee J.H."/>
            <person name="Kim S.Y."/>
            <person name="Chung S.S."/>
            <person name="Kim J.J."/>
            <person name="Moon Y.H."/>
            <person name="Jeong H."/>
            <person name="Choy H.E."/>
        </authorList>
    </citation>
    <scope>NUCLEOTIDE SEQUENCE [LARGE SCALE GENOMIC DNA]</scope>
    <source>
        <strain>CMCP6</strain>
    </source>
</reference>
<dbReference type="EC" id="4.2.1.17" evidence="1"/>
<dbReference type="EC" id="5.1.2.3" evidence="1"/>
<dbReference type="EC" id="1.1.1.35" evidence="1"/>
<dbReference type="EMBL" id="AE016795">
    <property type="protein sequence ID" value="AAO10376.1"/>
    <property type="molecule type" value="Genomic_DNA"/>
</dbReference>
<dbReference type="RefSeq" id="WP_011079875.1">
    <property type="nucleotide sequence ID" value="NC_004459.3"/>
</dbReference>
<dbReference type="SMR" id="Q8DB47"/>
<dbReference type="KEGG" id="vvu:VV1_1976"/>
<dbReference type="HOGENOM" id="CLU_009834_16_1_6"/>
<dbReference type="UniPathway" id="UPA00659"/>
<dbReference type="Proteomes" id="UP000002275">
    <property type="component" value="Chromosome 1"/>
</dbReference>
<dbReference type="GO" id="GO:0005737">
    <property type="term" value="C:cytoplasm"/>
    <property type="evidence" value="ECO:0007669"/>
    <property type="project" value="UniProtKB-SubCell"/>
</dbReference>
<dbReference type="GO" id="GO:0008692">
    <property type="term" value="F:3-hydroxybutyryl-CoA epimerase activity"/>
    <property type="evidence" value="ECO:0007669"/>
    <property type="project" value="UniProtKB-UniRule"/>
</dbReference>
<dbReference type="GO" id="GO:0004300">
    <property type="term" value="F:enoyl-CoA hydratase activity"/>
    <property type="evidence" value="ECO:0007669"/>
    <property type="project" value="UniProtKB-UniRule"/>
</dbReference>
<dbReference type="GO" id="GO:0016509">
    <property type="term" value="F:long-chain-3-hydroxyacyl-CoA dehydrogenase activity"/>
    <property type="evidence" value="ECO:0007669"/>
    <property type="project" value="TreeGrafter"/>
</dbReference>
<dbReference type="GO" id="GO:0070403">
    <property type="term" value="F:NAD+ binding"/>
    <property type="evidence" value="ECO:0007669"/>
    <property type="project" value="InterPro"/>
</dbReference>
<dbReference type="GO" id="GO:0006635">
    <property type="term" value="P:fatty acid beta-oxidation"/>
    <property type="evidence" value="ECO:0007669"/>
    <property type="project" value="UniProtKB-UniRule"/>
</dbReference>
<dbReference type="CDD" id="cd06558">
    <property type="entry name" value="crotonase-like"/>
    <property type="match status" value="1"/>
</dbReference>
<dbReference type="FunFam" id="3.90.226.10:FF:000011">
    <property type="entry name" value="Fatty acid oxidation complex subunit alpha"/>
    <property type="match status" value="1"/>
</dbReference>
<dbReference type="FunFam" id="3.40.50.720:FF:000009">
    <property type="entry name" value="Fatty oxidation complex, alpha subunit"/>
    <property type="match status" value="1"/>
</dbReference>
<dbReference type="Gene3D" id="1.10.1040.50">
    <property type="match status" value="1"/>
</dbReference>
<dbReference type="Gene3D" id="3.90.226.10">
    <property type="entry name" value="2-enoyl-CoA Hydratase, Chain A, domain 1"/>
    <property type="match status" value="1"/>
</dbReference>
<dbReference type="Gene3D" id="3.40.50.720">
    <property type="entry name" value="NAD(P)-binding Rossmann-like Domain"/>
    <property type="match status" value="1"/>
</dbReference>
<dbReference type="HAMAP" id="MF_01617">
    <property type="entry name" value="FadJ"/>
    <property type="match status" value="1"/>
</dbReference>
<dbReference type="InterPro" id="IPR006180">
    <property type="entry name" value="3-OHacyl-CoA_DH_CS"/>
</dbReference>
<dbReference type="InterPro" id="IPR006176">
    <property type="entry name" value="3-OHacyl-CoA_DH_NAD-bd"/>
</dbReference>
<dbReference type="InterPro" id="IPR006108">
    <property type="entry name" value="3HC_DH_C"/>
</dbReference>
<dbReference type="InterPro" id="IPR008927">
    <property type="entry name" value="6-PGluconate_DH-like_C_sf"/>
</dbReference>
<dbReference type="InterPro" id="IPR029045">
    <property type="entry name" value="ClpP/crotonase-like_dom_sf"/>
</dbReference>
<dbReference type="InterPro" id="IPR018376">
    <property type="entry name" value="Enoyl-CoA_hyd/isom_CS"/>
</dbReference>
<dbReference type="InterPro" id="IPR001753">
    <property type="entry name" value="Enoyl-CoA_hydra/iso"/>
</dbReference>
<dbReference type="InterPro" id="IPR050136">
    <property type="entry name" value="FA_oxidation_alpha_subunit"/>
</dbReference>
<dbReference type="InterPro" id="IPR012802">
    <property type="entry name" value="FadJ"/>
</dbReference>
<dbReference type="InterPro" id="IPR036291">
    <property type="entry name" value="NAD(P)-bd_dom_sf"/>
</dbReference>
<dbReference type="NCBIfam" id="TIGR02440">
    <property type="entry name" value="FadJ"/>
    <property type="match status" value="1"/>
</dbReference>
<dbReference type="NCBIfam" id="NF008363">
    <property type="entry name" value="PRK11154.1"/>
    <property type="match status" value="1"/>
</dbReference>
<dbReference type="PANTHER" id="PTHR43612">
    <property type="entry name" value="TRIFUNCTIONAL ENZYME SUBUNIT ALPHA"/>
    <property type="match status" value="1"/>
</dbReference>
<dbReference type="PANTHER" id="PTHR43612:SF3">
    <property type="entry name" value="TRIFUNCTIONAL ENZYME SUBUNIT ALPHA, MITOCHONDRIAL"/>
    <property type="match status" value="1"/>
</dbReference>
<dbReference type="Pfam" id="PF00725">
    <property type="entry name" value="3HCDH"/>
    <property type="match status" value="2"/>
</dbReference>
<dbReference type="Pfam" id="PF02737">
    <property type="entry name" value="3HCDH_N"/>
    <property type="match status" value="1"/>
</dbReference>
<dbReference type="Pfam" id="PF00378">
    <property type="entry name" value="ECH_1"/>
    <property type="match status" value="1"/>
</dbReference>
<dbReference type="SUPFAM" id="SSF48179">
    <property type="entry name" value="6-phosphogluconate dehydrogenase C-terminal domain-like"/>
    <property type="match status" value="2"/>
</dbReference>
<dbReference type="SUPFAM" id="SSF52096">
    <property type="entry name" value="ClpP/crotonase"/>
    <property type="match status" value="1"/>
</dbReference>
<dbReference type="SUPFAM" id="SSF51735">
    <property type="entry name" value="NAD(P)-binding Rossmann-fold domains"/>
    <property type="match status" value="1"/>
</dbReference>
<dbReference type="PROSITE" id="PS00067">
    <property type="entry name" value="3HCDH"/>
    <property type="match status" value="1"/>
</dbReference>
<dbReference type="PROSITE" id="PS00166">
    <property type="entry name" value="ENOYL_COA_HYDRATASE"/>
    <property type="match status" value="1"/>
</dbReference>
<feature type="chain" id="PRO_0000109313" description="Fatty acid oxidation complex subunit alpha">
    <location>
        <begin position="1"/>
        <end position="705"/>
    </location>
</feature>
<feature type="region of interest" description="Enoyl-CoA hydratase" evidence="1">
    <location>
        <begin position="1"/>
        <end position="190"/>
    </location>
</feature>
<feature type="region of interest" description="3-hydroxyacyl-CoA dehydrogenase" evidence="1">
    <location>
        <begin position="308"/>
        <end position="705"/>
    </location>
</feature>
<feature type="site" description="Important for catalytic activity" evidence="1">
    <location>
        <position position="118"/>
    </location>
</feature>
<feature type="site" description="Important for catalytic activity" evidence="1">
    <location>
        <position position="140"/>
    </location>
</feature>
<keyword id="KW-0963">Cytoplasm</keyword>
<keyword id="KW-0276">Fatty acid metabolism</keyword>
<keyword id="KW-0413">Isomerase</keyword>
<keyword id="KW-0442">Lipid degradation</keyword>
<keyword id="KW-0443">Lipid metabolism</keyword>
<keyword id="KW-0456">Lyase</keyword>
<keyword id="KW-0511">Multifunctional enzyme</keyword>
<keyword id="KW-0520">NAD</keyword>
<keyword id="KW-0560">Oxidoreductase</keyword>
<name>FADJ_VIBVU</name>
<proteinExistence type="inferred from homology"/>
<organism>
    <name type="scientific">Vibrio vulnificus (strain CMCP6)</name>
    <dbReference type="NCBI Taxonomy" id="216895"/>
    <lineage>
        <taxon>Bacteria</taxon>
        <taxon>Pseudomonadati</taxon>
        <taxon>Pseudomonadota</taxon>
        <taxon>Gammaproteobacteria</taxon>
        <taxon>Vibrionales</taxon>
        <taxon>Vibrionaceae</taxon>
        <taxon>Vibrio</taxon>
    </lineage>
</organism>